<dbReference type="EC" id="1.3.3.11" evidence="1"/>
<dbReference type="EMBL" id="CP001172">
    <property type="protein sequence ID" value="ACJ57997.1"/>
    <property type="molecule type" value="Genomic_DNA"/>
</dbReference>
<dbReference type="RefSeq" id="WP_000195110.1">
    <property type="nucleotide sequence ID" value="NZ_CP001172.1"/>
</dbReference>
<dbReference type="SMR" id="B7H2Y2"/>
<dbReference type="GeneID" id="92893973"/>
<dbReference type="HOGENOM" id="CLU_080136_0_0_6"/>
<dbReference type="UniPathway" id="UPA00539"/>
<dbReference type="Proteomes" id="UP000006924">
    <property type="component" value="Chromosome"/>
</dbReference>
<dbReference type="GO" id="GO:0033732">
    <property type="term" value="F:pyrroloquinoline-quinone synthase activity"/>
    <property type="evidence" value="ECO:0007669"/>
    <property type="project" value="UniProtKB-EC"/>
</dbReference>
<dbReference type="GO" id="GO:0018189">
    <property type="term" value="P:pyrroloquinoline quinone biosynthetic process"/>
    <property type="evidence" value="ECO:0007669"/>
    <property type="project" value="UniProtKB-UniRule"/>
</dbReference>
<dbReference type="GO" id="GO:0006790">
    <property type="term" value="P:sulfur compound metabolic process"/>
    <property type="evidence" value="ECO:0007669"/>
    <property type="project" value="UniProtKB-ARBA"/>
</dbReference>
<dbReference type="Gene3D" id="1.20.910.10">
    <property type="entry name" value="Heme oxygenase-like"/>
    <property type="match status" value="1"/>
</dbReference>
<dbReference type="HAMAP" id="MF_00654">
    <property type="entry name" value="PQQ_syn_PqqC"/>
    <property type="match status" value="1"/>
</dbReference>
<dbReference type="InterPro" id="IPR016084">
    <property type="entry name" value="Haem_Oase-like_multi-hlx"/>
</dbReference>
<dbReference type="InterPro" id="IPR011845">
    <property type="entry name" value="PqqC"/>
</dbReference>
<dbReference type="InterPro" id="IPR039068">
    <property type="entry name" value="PqqC-like"/>
</dbReference>
<dbReference type="InterPro" id="IPR004305">
    <property type="entry name" value="Thiaminase-2/PQQC"/>
</dbReference>
<dbReference type="NCBIfam" id="TIGR02111">
    <property type="entry name" value="PQQ_syn_pqqC"/>
    <property type="match status" value="1"/>
</dbReference>
<dbReference type="PANTHER" id="PTHR40279:SF3">
    <property type="entry name" value="4-AMINOBENZOATE SYNTHASE"/>
    <property type="match status" value="1"/>
</dbReference>
<dbReference type="PANTHER" id="PTHR40279">
    <property type="entry name" value="PQQC-LIKE PROTEIN"/>
    <property type="match status" value="1"/>
</dbReference>
<dbReference type="Pfam" id="PF03070">
    <property type="entry name" value="TENA_THI-4"/>
    <property type="match status" value="1"/>
</dbReference>
<dbReference type="SUPFAM" id="SSF48613">
    <property type="entry name" value="Heme oxygenase-like"/>
    <property type="match status" value="1"/>
</dbReference>
<sequence>MTQTPEALTTEQFKQAIIDKGQYYHIYHPFHVMMYEGKATQQQIQAWVANRYYYQINIPLKDAAIMANCPDQRVRQEWIQRMIDQDGEYPDGGGREAWLRLAEAVGLSREQVISEELVLPGVRFAVDAYVNFARRASWREAASSSLTELFAPQIHQSRLESWPQHYPWIDDKGYEYFRSRLSQARRDVEHGLTITLDSFTTHEQQQRMLEILQFKLDILWSILDALTLAYVHNEAPYHSVTQERVWHKGLFK</sequence>
<comment type="function">
    <text evidence="1">Ring cyclization and eight-electron oxidation of 3a-(2-amino-2-carboxyethyl)-4,5-dioxo-4,5,6,7,8,9-hexahydroquinoline-7,9-dicarboxylic-acid to PQQ.</text>
</comment>
<comment type="catalytic activity">
    <reaction evidence="1">
        <text>6-(2-amino-2-carboxyethyl)-7,8-dioxo-1,2,3,4,7,8-hexahydroquinoline-2,4-dicarboxylate + 3 O2 = pyrroloquinoline quinone + 2 H2O2 + 2 H2O + H(+)</text>
        <dbReference type="Rhea" id="RHEA:10692"/>
        <dbReference type="ChEBI" id="CHEBI:15377"/>
        <dbReference type="ChEBI" id="CHEBI:15378"/>
        <dbReference type="ChEBI" id="CHEBI:15379"/>
        <dbReference type="ChEBI" id="CHEBI:16240"/>
        <dbReference type="ChEBI" id="CHEBI:58442"/>
        <dbReference type="ChEBI" id="CHEBI:58778"/>
        <dbReference type="EC" id="1.3.3.11"/>
    </reaction>
</comment>
<comment type="pathway">
    <text evidence="1">Cofactor biosynthesis; pyrroloquinoline quinone biosynthesis.</text>
</comment>
<comment type="similarity">
    <text evidence="1">Belongs to the PqqC family.</text>
</comment>
<keyword id="KW-0560">Oxidoreductase</keyword>
<keyword id="KW-0884">PQQ biosynthesis</keyword>
<evidence type="ECO:0000255" key="1">
    <source>
        <dbReference type="HAMAP-Rule" id="MF_00654"/>
    </source>
</evidence>
<name>PQQC_ACIB3</name>
<reference key="1">
    <citation type="journal article" date="2008" name="J. Bacteriol.">
        <title>Comparative genome sequence analysis of multidrug-resistant Acinetobacter baumannii.</title>
        <authorList>
            <person name="Adams M.D."/>
            <person name="Goglin K."/>
            <person name="Molyneaux N."/>
            <person name="Hujer K.M."/>
            <person name="Lavender H."/>
            <person name="Jamison J.J."/>
            <person name="MacDonald I.J."/>
            <person name="Martin K.M."/>
            <person name="Russo T."/>
            <person name="Campagnari A.A."/>
            <person name="Hujer A.M."/>
            <person name="Bonomo R.A."/>
            <person name="Gill S.R."/>
        </authorList>
    </citation>
    <scope>NUCLEOTIDE SEQUENCE [LARGE SCALE GENOMIC DNA]</scope>
    <source>
        <strain>AB307-0294</strain>
    </source>
</reference>
<proteinExistence type="inferred from homology"/>
<gene>
    <name evidence="1" type="primary">pqqC</name>
    <name type="ordered locus">ABBFA_001733</name>
</gene>
<accession>B7H2Y2</accession>
<protein>
    <recommendedName>
        <fullName evidence="1">Pyrroloquinoline-quinone synthase</fullName>
        <ecNumber evidence="1">1.3.3.11</ecNumber>
    </recommendedName>
    <alternativeName>
        <fullName evidence="1">Coenzyme PQQ synthesis protein C</fullName>
    </alternativeName>
    <alternativeName>
        <fullName evidence="1">Pyrroloquinoline quinone biosynthesis protein C</fullName>
    </alternativeName>
</protein>
<organism>
    <name type="scientific">Acinetobacter baumannii (strain AB307-0294)</name>
    <dbReference type="NCBI Taxonomy" id="557600"/>
    <lineage>
        <taxon>Bacteria</taxon>
        <taxon>Pseudomonadati</taxon>
        <taxon>Pseudomonadota</taxon>
        <taxon>Gammaproteobacteria</taxon>
        <taxon>Moraxellales</taxon>
        <taxon>Moraxellaceae</taxon>
        <taxon>Acinetobacter</taxon>
        <taxon>Acinetobacter calcoaceticus/baumannii complex</taxon>
    </lineage>
</organism>
<feature type="chain" id="PRO_1000131171" description="Pyrroloquinoline-quinone synthase">
    <location>
        <begin position="1"/>
        <end position="252"/>
    </location>
</feature>